<feature type="chain" id="PRO_0000334957" description="Ribonuclease HII">
    <location>
        <begin position="1"/>
        <end position="229"/>
    </location>
</feature>
<feature type="domain" description="RNase H type-2" evidence="2">
    <location>
        <begin position="42"/>
        <end position="229"/>
    </location>
</feature>
<feature type="binding site" evidence="1">
    <location>
        <position position="48"/>
    </location>
    <ligand>
        <name>a divalent metal cation</name>
        <dbReference type="ChEBI" id="CHEBI:60240"/>
    </ligand>
</feature>
<feature type="binding site" evidence="1">
    <location>
        <position position="49"/>
    </location>
    <ligand>
        <name>a divalent metal cation</name>
        <dbReference type="ChEBI" id="CHEBI:60240"/>
    </ligand>
</feature>
<feature type="binding site" evidence="1">
    <location>
        <position position="139"/>
    </location>
    <ligand>
        <name>a divalent metal cation</name>
        <dbReference type="ChEBI" id="CHEBI:60240"/>
    </ligand>
</feature>
<reference key="1">
    <citation type="submission" date="2006-05" db="EMBL/GenBank/DDBJ databases">
        <title>Complete sequence of chromosome of Silicibacter sp. TM1040.</title>
        <authorList>
            <consortium name="US DOE Joint Genome Institute"/>
            <person name="Copeland A."/>
            <person name="Lucas S."/>
            <person name="Lapidus A."/>
            <person name="Barry K."/>
            <person name="Detter J.C."/>
            <person name="Glavina del Rio T."/>
            <person name="Hammon N."/>
            <person name="Israni S."/>
            <person name="Dalin E."/>
            <person name="Tice H."/>
            <person name="Pitluck S."/>
            <person name="Brettin T."/>
            <person name="Bruce D."/>
            <person name="Han C."/>
            <person name="Tapia R."/>
            <person name="Goodwin L."/>
            <person name="Thompson L.S."/>
            <person name="Gilna P."/>
            <person name="Schmutz J."/>
            <person name="Larimer F."/>
            <person name="Land M."/>
            <person name="Hauser L."/>
            <person name="Kyrpides N."/>
            <person name="Kim E."/>
            <person name="Belas R."/>
            <person name="Moran M.A."/>
            <person name="Buchan A."/>
            <person name="Gonzalez J.M."/>
            <person name="Schell M.A."/>
            <person name="Sun F."/>
            <person name="Richardson P."/>
        </authorList>
    </citation>
    <scope>NUCLEOTIDE SEQUENCE [LARGE SCALE GENOMIC DNA]</scope>
    <source>
        <strain>TM1040</strain>
    </source>
</reference>
<gene>
    <name evidence="1" type="primary">rnhB</name>
    <name type="ordered locus">TM1040_2650</name>
</gene>
<keyword id="KW-0963">Cytoplasm</keyword>
<keyword id="KW-0255">Endonuclease</keyword>
<keyword id="KW-0378">Hydrolase</keyword>
<keyword id="KW-0464">Manganese</keyword>
<keyword id="KW-0479">Metal-binding</keyword>
<keyword id="KW-0540">Nuclease</keyword>
<keyword id="KW-1185">Reference proteome</keyword>
<dbReference type="EC" id="3.1.26.4" evidence="1"/>
<dbReference type="EMBL" id="CP000377">
    <property type="protein sequence ID" value="ABF65382.1"/>
    <property type="molecule type" value="Genomic_DNA"/>
</dbReference>
<dbReference type="SMR" id="Q1GD84"/>
<dbReference type="STRING" id="292414.TM1040_2650"/>
<dbReference type="KEGG" id="sit:TM1040_2650"/>
<dbReference type="eggNOG" id="COG0164">
    <property type="taxonomic scope" value="Bacteria"/>
</dbReference>
<dbReference type="HOGENOM" id="CLU_036532_3_2_5"/>
<dbReference type="Proteomes" id="UP000000636">
    <property type="component" value="Chromosome"/>
</dbReference>
<dbReference type="GO" id="GO:0005737">
    <property type="term" value="C:cytoplasm"/>
    <property type="evidence" value="ECO:0007669"/>
    <property type="project" value="UniProtKB-SubCell"/>
</dbReference>
<dbReference type="GO" id="GO:0032299">
    <property type="term" value="C:ribonuclease H2 complex"/>
    <property type="evidence" value="ECO:0007669"/>
    <property type="project" value="TreeGrafter"/>
</dbReference>
<dbReference type="GO" id="GO:0030145">
    <property type="term" value="F:manganese ion binding"/>
    <property type="evidence" value="ECO:0007669"/>
    <property type="project" value="UniProtKB-UniRule"/>
</dbReference>
<dbReference type="GO" id="GO:0003723">
    <property type="term" value="F:RNA binding"/>
    <property type="evidence" value="ECO:0007669"/>
    <property type="project" value="InterPro"/>
</dbReference>
<dbReference type="GO" id="GO:0004523">
    <property type="term" value="F:RNA-DNA hybrid ribonuclease activity"/>
    <property type="evidence" value="ECO:0007669"/>
    <property type="project" value="UniProtKB-UniRule"/>
</dbReference>
<dbReference type="GO" id="GO:0043137">
    <property type="term" value="P:DNA replication, removal of RNA primer"/>
    <property type="evidence" value="ECO:0007669"/>
    <property type="project" value="TreeGrafter"/>
</dbReference>
<dbReference type="GO" id="GO:0006298">
    <property type="term" value="P:mismatch repair"/>
    <property type="evidence" value="ECO:0007669"/>
    <property type="project" value="TreeGrafter"/>
</dbReference>
<dbReference type="CDD" id="cd07182">
    <property type="entry name" value="RNase_HII_bacteria_HII_like"/>
    <property type="match status" value="1"/>
</dbReference>
<dbReference type="FunFam" id="3.30.420.10:FF:000006">
    <property type="entry name" value="Ribonuclease HII"/>
    <property type="match status" value="1"/>
</dbReference>
<dbReference type="Gene3D" id="3.30.420.10">
    <property type="entry name" value="Ribonuclease H-like superfamily/Ribonuclease H"/>
    <property type="match status" value="1"/>
</dbReference>
<dbReference type="HAMAP" id="MF_00052_B">
    <property type="entry name" value="RNase_HII_B"/>
    <property type="match status" value="1"/>
</dbReference>
<dbReference type="InterPro" id="IPR022898">
    <property type="entry name" value="RNase_HII"/>
</dbReference>
<dbReference type="InterPro" id="IPR001352">
    <property type="entry name" value="RNase_HII/HIII"/>
</dbReference>
<dbReference type="InterPro" id="IPR024567">
    <property type="entry name" value="RNase_HII/HIII_dom"/>
</dbReference>
<dbReference type="InterPro" id="IPR012337">
    <property type="entry name" value="RNaseH-like_sf"/>
</dbReference>
<dbReference type="InterPro" id="IPR036397">
    <property type="entry name" value="RNaseH_sf"/>
</dbReference>
<dbReference type="NCBIfam" id="NF000594">
    <property type="entry name" value="PRK00015.1-1"/>
    <property type="match status" value="1"/>
</dbReference>
<dbReference type="NCBIfam" id="NF000595">
    <property type="entry name" value="PRK00015.1-3"/>
    <property type="match status" value="1"/>
</dbReference>
<dbReference type="PANTHER" id="PTHR10954">
    <property type="entry name" value="RIBONUCLEASE H2 SUBUNIT A"/>
    <property type="match status" value="1"/>
</dbReference>
<dbReference type="PANTHER" id="PTHR10954:SF18">
    <property type="entry name" value="RIBONUCLEASE HII"/>
    <property type="match status" value="1"/>
</dbReference>
<dbReference type="Pfam" id="PF01351">
    <property type="entry name" value="RNase_HII"/>
    <property type="match status" value="1"/>
</dbReference>
<dbReference type="SUPFAM" id="SSF53098">
    <property type="entry name" value="Ribonuclease H-like"/>
    <property type="match status" value="1"/>
</dbReference>
<dbReference type="PROSITE" id="PS51975">
    <property type="entry name" value="RNASE_H_2"/>
    <property type="match status" value="1"/>
</dbReference>
<sequence>MRPFFCAAFGAPSCMRAANALSGGMDYPDLSLEEAAQARGYTRIAGVDEVGRGPLAGPVTAAAVVLDLADLPEGLNDSKKLTPRRRAALEPEIMARASYAVAHASVEEIDHHNILRASHLAMERAVAALDPQPDYLLIDGNLIPRALHIPAEAVVKGDGRSLSIAAASILAKEARDRIMVDLAQQFPGYGWERNAGYPSKQHRDALIKIGVTPHHRRSFKPVHKILYQE</sequence>
<evidence type="ECO:0000255" key="1">
    <source>
        <dbReference type="HAMAP-Rule" id="MF_00052"/>
    </source>
</evidence>
<evidence type="ECO:0000255" key="2">
    <source>
        <dbReference type="PROSITE-ProRule" id="PRU01319"/>
    </source>
</evidence>
<protein>
    <recommendedName>
        <fullName evidence="1">Ribonuclease HII</fullName>
        <shortName evidence="1">RNase HII</shortName>
        <ecNumber evidence="1">3.1.26.4</ecNumber>
    </recommendedName>
</protein>
<name>RNH2_RUEST</name>
<organism>
    <name type="scientific">Ruegeria sp. (strain TM1040)</name>
    <name type="common">Silicibacter sp.</name>
    <dbReference type="NCBI Taxonomy" id="292414"/>
    <lineage>
        <taxon>Bacteria</taxon>
        <taxon>Pseudomonadati</taxon>
        <taxon>Pseudomonadota</taxon>
        <taxon>Alphaproteobacteria</taxon>
        <taxon>Rhodobacterales</taxon>
        <taxon>Roseobacteraceae</taxon>
        <taxon>Ruegeria</taxon>
    </lineage>
</organism>
<proteinExistence type="inferred from homology"/>
<accession>Q1GD84</accession>
<comment type="function">
    <text evidence="1">Endonuclease that specifically degrades the RNA of RNA-DNA hybrids.</text>
</comment>
<comment type="catalytic activity">
    <reaction evidence="1">
        <text>Endonucleolytic cleavage to 5'-phosphomonoester.</text>
        <dbReference type="EC" id="3.1.26.4"/>
    </reaction>
</comment>
<comment type="cofactor">
    <cofactor evidence="1">
        <name>Mn(2+)</name>
        <dbReference type="ChEBI" id="CHEBI:29035"/>
    </cofactor>
    <cofactor evidence="1">
        <name>Mg(2+)</name>
        <dbReference type="ChEBI" id="CHEBI:18420"/>
    </cofactor>
    <text evidence="1">Manganese or magnesium. Binds 1 divalent metal ion per monomer in the absence of substrate. May bind a second metal ion after substrate binding.</text>
</comment>
<comment type="subcellular location">
    <subcellularLocation>
        <location evidence="1">Cytoplasm</location>
    </subcellularLocation>
</comment>
<comment type="similarity">
    <text evidence="1">Belongs to the RNase HII family.</text>
</comment>